<comment type="function">
    <text evidence="1">The alpha subunit is responsible for the aldol cleavage of indoleglycerol phosphate to indole and glyceraldehyde 3-phosphate.</text>
</comment>
<comment type="catalytic activity">
    <reaction evidence="1">
        <text>(1S,2R)-1-C-(indol-3-yl)glycerol 3-phosphate + L-serine = D-glyceraldehyde 3-phosphate + L-tryptophan + H2O</text>
        <dbReference type="Rhea" id="RHEA:10532"/>
        <dbReference type="ChEBI" id="CHEBI:15377"/>
        <dbReference type="ChEBI" id="CHEBI:33384"/>
        <dbReference type="ChEBI" id="CHEBI:57912"/>
        <dbReference type="ChEBI" id="CHEBI:58866"/>
        <dbReference type="ChEBI" id="CHEBI:59776"/>
        <dbReference type="EC" id="4.2.1.20"/>
    </reaction>
</comment>
<comment type="pathway">
    <text evidence="1">Amino-acid biosynthesis; L-tryptophan biosynthesis; L-tryptophan from chorismate: step 5/5.</text>
</comment>
<comment type="subunit">
    <text evidence="1">Tetramer of two alpha and two beta chains.</text>
</comment>
<comment type="similarity">
    <text evidence="1">Belongs to the TrpA family.</text>
</comment>
<evidence type="ECO:0000255" key="1">
    <source>
        <dbReference type="HAMAP-Rule" id="MF_00131"/>
    </source>
</evidence>
<reference key="1">
    <citation type="journal article" date="2006" name="Mol. Microbiol.">
        <title>Role of pathogenicity island-associated integrases in the genome plasticity of uropathogenic Escherichia coli strain 536.</title>
        <authorList>
            <person name="Hochhut B."/>
            <person name="Wilde C."/>
            <person name="Balling G."/>
            <person name="Middendorf B."/>
            <person name="Dobrindt U."/>
            <person name="Brzuszkiewicz E."/>
            <person name="Gottschalk G."/>
            <person name="Carniel E."/>
            <person name="Hacker J."/>
        </authorList>
    </citation>
    <scope>NUCLEOTIDE SEQUENCE [LARGE SCALE GENOMIC DNA]</scope>
    <source>
        <strain>536 / UPEC</strain>
    </source>
</reference>
<gene>
    <name evidence="1" type="primary">trpA</name>
    <name type="ordered locus">ECP_1308</name>
</gene>
<organism>
    <name type="scientific">Escherichia coli O6:K15:H31 (strain 536 / UPEC)</name>
    <dbReference type="NCBI Taxonomy" id="362663"/>
    <lineage>
        <taxon>Bacteria</taxon>
        <taxon>Pseudomonadati</taxon>
        <taxon>Pseudomonadota</taxon>
        <taxon>Gammaproteobacteria</taxon>
        <taxon>Enterobacterales</taxon>
        <taxon>Enterobacteriaceae</taxon>
        <taxon>Escherichia</taxon>
    </lineage>
</organism>
<proteinExistence type="inferred from homology"/>
<feature type="chain" id="PRO_1000018197" description="Tryptophan synthase alpha chain">
    <location>
        <begin position="1"/>
        <end position="268"/>
    </location>
</feature>
<feature type="active site" description="Proton acceptor" evidence="1">
    <location>
        <position position="49"/>
    </location>
</feature>
<feature type="active site" description="Proton acceptor" evidence="1">
    <location>
        <position position="60"/>
    </location>
</feature>
<accession>Q0TIB0</accession>
<protein>
    <recommendedName>
        <fullName evidence="1">Tryptophan synthase alpha chain</fullName>
        <ecNumber evidence="1">4.2.1.20</ecNumber>
    </recommendedName>
</protein>
<name>TRPA_ECOL5</name>
<dbReference type="EC" id="4.2.1.20" evidence="1"/>
<dbReference type="EMBL" id="CP000247">
    <property type="protein sequence ID" value="ABG69319.1"/>
    <property type="molecule type" value="Genomic_DNA"/>
</dbReference>
<dbReference type="RefSeq" id="WP_000443091.1">
    <property type="nucleotide sequence ID" value="NC_008253.1"/>
</dbReference>
<dbReference type="SMR" id="Q0TIB0"/>
<dbReference type="KEGG" id="ecp:ECP_1308"/>
<dbReference type="HOGENOM" id="CLU_016734_0_4_6"/>
<dbReference type="UniPathway" id="UPA00035">
    <property type="reaction ID" value="UER00044"/>
</dbReference>
<dbReference type="Proteomes" id="UP000009182">
    <property type="component" value="Chromosome"/>
</dbReference>
<dbReference type="GO" id="GO:0005829">
    <property type="term" value="C:cytosol"/>
    <property type="evidence" value="ECO:0007669"/>
    <property type="project" value="TreeGrafter"/>
</dbReference>
<dbReference type="GO" id="GO:0004834">
    <property type="term" value="F:tryptophan synthase activity"/>
    <property type="evidence" value="ECO:0007669"/>
    <property type="project" value="UniProtKB-UniRule"/>
</dbReference>
<dbReference type="CDD" id="cd04724">
    <property type="entry name" value="Tryptophan_synthase_alpha"/>
    <property type="match status" value="1"/>
</dbReference>
<dbReference type="FunFam" id="3.20.20.70:FF:000037">
    <property type="entry name" value="Tryptophan synthase alpha chain"/>
    <property type="match status" value="1"/>
</dbReference>
<dbReference type="Gene3D" id="3.20.20.70">
    <property type="entry name" value="Aldolase class I"/>
    <property type="match status" value="1"/>
</dbReference>
<dbReference type="HAMAP" id="MF_00131">
    <property type="entry name" value="Trp_synth_alpha"/>
    <property type="match status" value="1"/>
</dbReference>
<dbReference type="InterPro" id="IPR013785">
    <property type="entry name" value="Aldolase_TIM"/>
</dbReference>
<dbReference type="InterPro" id="IPR011060">
    <property type="entry name" value="RibuloseP-bd_barrel"/>
</dbReference>
<dbReference type="InterPro" id="IPR018204">
    <property type="entry name" value="Trp_synthase_alpha_AS"/>
</dbReference>
<dbReference type="InterPro" id="IPR002028">
    <property type="entry name" value="Trp_synthase_suA"/>
</dbReference>
<dbReference type="NCBIfam" id="TIGR00262">
    <property type="entry name" value="trpA"/>
    <property type="match status" value="1"/>
</dbReference>
<dbReference type="PANTHER" id="PTHR43406:SF1">
    <property type="entry name" value="TRYPTOPHAN SYNTHASE ALPHA CHAIN, CHLOROPLASTIC"/>
    <property type="match status" value="1"/>
</dbReference>
<dbReference type="PANTHER" id="PTHR43406">
    <property type="entry name" value="TRYPTOPHAN SYNTHASE, ALPHA CHAIN"/>
    <property type="match status" value="1"/>
</dbReference>
<dbReference type="Pfam" id="PF00290">
    <property type="entry name" value="Trp_syntA"/>
    <property type="match status" value="1"/>
</dbReference>
<dbReference type="SUPFAM" id="SSF51366">
    <property type="entry name" value="Ribulose-phoshate binding barrel"/>
    <property type="match status" value="1"/>
</dbReference>
<dbReference type="PROSITE" id="PS00167">
    <property type="entry name" value="TRP_SYNTHASE_ALPHA"/>
    <property type="match status" value="1"/>
</dbReference>
<sequence>MERYESLFAQLKERKEGAFVPFVTLGDPGIEQSLKIIDTLIEAGADALELGTPFSDPLADGPTIQNATLRAFAAGVTPAQCFEVLALIRQKHPTIPIGLLMYANLVFNKGIDEFYAECEKVGVDSVLVADVPVEESAPFRQAALRHNVAPIFICPPNADDDLLRQIASYGRGYTYLLSRAGVTGAENRAALPLNHLVAKLKEYNAAPPLQGFGISAPDQVKAAIDAGAAGAISGSAIVKIIEQHINEPEKMLAALKAFVQPMKAATRS</sequence>
<keyword id="KW-0028">Amino-acid biosynthesis</keyword>
<keyword id="KW-0057">Aromatic amino acid biosynthesis</keyword>
<keyword id="KW-0456">Lyase</keyword>
<keyword id="KW-0822">Tryptophan biosynthesis</keyword>